<protein>
    <recommendedName>
        <fullName evidence="1">4-hydroxy-tetrahydrodipicolinate synthase</fullName>
        <shortName evidence="1">HTPA synthase</shortName>
        <ecNumber evidence="1">4.3.3.7</ecNumber>
    </recommendedName>
</protein>
<comment type="function">
    <text evidence="1">Catalyzes the condensation of (S)-aspartate-beta-semialdehyde [(S)-ASA] and pyruvate to 4-hydroxy-tetrahydrodipicolinate (HTPA).</text>
</comment>
<comment type="catalytic activity">
    <reaction evidence="1">
        <text>L-aspartate 4-semialdehyde + pyruvate = (2S,4S)-4-hydroxy-2,3,4,5-tetrahydrodipicolinate + H2O + H(+)</text>
        <dbReference type="Rhea" id="RHEA:34171"/>
        <dbReference type="ChEBI" id="CHEBI:15361"/>
        <dbReference type="ChEBI" id="CHEBI:15377"/>
        <dbReference type="ChEBI" id="CHEBI:15378"/>
        <dbReference type="ChEBI" id="CHEBI:67139"/>
        <dbReference type="ChEBI" id="CHEBI:537519"/>
        <dbReference type="EC" id="4.3.3.7"/>
    </reaction>
</comment>
<comment type="pathway">
    <text evidence="1">Amino-acid biosynthesis; L-lysine biosynthesis via DAP pathway; (S)-tetrahydrodipicolinate from L-aspartate: step 3/4.</text>
</comment>
<comment type="subunit">
    <text evidence="1">Homotetramer; dimer of dimers.</text>
</comment>
<comment type="subcellular location">
    <subcellularLocation>
        <location evidence="1">Cytoplasm</location>
    </subcellularLocation>
</comment>
<comment type="similarity">
    <text evidence="1">Belongs to the DapA family.</text>
</comment>
<comment type="caution">
    <text evidence="2">Was originally thought to be a dihydrodipicolinate synthase (DHDPS), catalyzing the condensation of (S)-aspartate-beta-semialdehyde [(S)-ASA] and pyruvate to dihydrodipicolinate (DHDP). However, it was shown in E.coli that the product of the enzymatic reaction is not dihydrodipicolinate but in fact (4S)-4-hydroxy-2,3,4,5-tetrahydro-(2S)-dipicolinic acid (HTPA), and that the consecutive dehydration reaction leading to DHDP is not spontaneous but catalyzed by DapB.</text>
</comment>
<gene>
    <name evidence="1" type="primary">dapA</name>
    <name type="ordered locus">LEUM_0670</name>
</gene>
<accession>Q03YE2</accession>
<keyword id="KW-0028">Amino-acid biosynthesis</keyword>
<keyword id="KW-0963">Cytoplasm</keyword>
<keyword id="KW-0220">Diaminopimelate biosynthesis</keyword>
<keyword id="KW-0456">Lyase</keyword>
<keyword id="KW-0457">Lysine biosynthesis</keyword>
<keyword id="KW-1185">Reference proteome</keyword>
<keyword id="KW-0704">Schiff base</keyword>
<sequence length="288" mass="31244">MYEGINLITAIITPFTVNDEIDYESLEKLIEHLLNHGSQGFVIAGTTGESPTLSFEEKVELTRFIAKQVGNRALLIANAGSNNTKESVEAAKALSKIEHINGILAVTPYYNKPSQAGMIAHFKAIADASEKPVMLYNIPGRTVVGLTVDSVIELAQHPNINAIKETTSTEFVEAEVEGATGFAVYTGEDAMTLSAYTVGGAGTISVASHLYGDEMSELFSAMNAGNWREAGRLQRYLTPRMNALFAYPSPTPVKTKLAEKGFVREAVRLPLIPLSDAEKLHLNELLEK</sequence>
<dbReference type="EC" id="4.3.3.7" evidence="1"/>
<dbReference type="EMBL" id="CP000414">
    <property type="protein sequence ID" value="ABJ61780.1"/>
    <property type="molecule type" value="Genomic_DNA"/>
</dbReference>
<dbReference type="RefSeq" id="WP_011679472.1">
    <property type="nucleotide sequence ID" value="NC_008531.1"/>
</dbReference>
<dbReference type="SMR" id="Q03YE2"/>
<dbReference type="EnsemblBacteria" id="ABJ61780">
    <property type="protein sequence ID" value="ABJ61780"/>
    <property type="gene ID" value="LEUM_0670"/>
</dbReference>
<dbReference type="GeneID" id="29577102"/>
<dbReference type="KEGG" id="lme:LEUM_0670"/>
<dbReference type="eggNOG" id="COG0329">
    <property type="taxonomic scope" value="Bacteria"/>
</dbReference>
<dbReference type="HOGENOM" id="CLU_049343_7_1_9"/>
<dbReference type="UniPathway" id="UPA00034">
    <property type="reaction ID" value="UER00017"/>
</dbReference>
<dbReference type="Proteomes" id="UP000000362">
    <property type="component" value="Chromosome"/>
</dbReference>
<dbReference type="GO" id="GO:0005829">
    <property type="term" value="C:cytosol"/>
    <property type="evidence" value="ECO:0007669"/>
    <property type="project" value="TreeGrafter"/>
</dbReference>
<dbReference type="GO" id="GO:0008840">
    <property type="term" value="F:4-hydroxy-tetrahydrodipicolinate synthase activity"/>
    <property type="evidence" value="ECO:0007669"/>
    <property type="project" value="UniProtKB-UniRule"/>
</dbReference>
<dbReference type="GO" id="GO:0019877">
    <property type="term" value="P:diaminopimelate biosynthetic process"/>
    <property type="evidence" value="ECO:0007669"/>
    <property type="project" value="UniProtKB-UniRule"/>
</dbReference>
<dbReference type="GO" id="GO:0009089">
    <property type="term" value="P:lysine biosynthetic process via diaminopimelate"/>
    <property type="evidence" value="ECO:0007669"/>
    <property type="project" value="UniProtKB-UniRule"/>
</dbReference>
<dbReference type="CDD" id="cd00950">
    <property type="entry name" value="DHDPS"/>
    <property type="match status" value="1"/>
</dbReference>
<dbReference type="Gene3D" id="3.20.20.70">
    <property type="entry name" value="Aldolase class I"/>
    <property type="match status" value="1"/>
</dbReference>
<dbReference type="HAMAP" id="MF_00418">
    <property type="entry name" value="DapA"/>
    <property type="match status" value="1"/>
</dbReference>
<dbReference type="InterPro" id="IPR013785">
    <property type="entry name" value="Aldolase_TIM"/>
</dbReference>
<dbReference type="InterPro" id="IPR005263">
    <property type="entry name" value="DapA"/>
</dbReference>
<dbReference type="InterPro" id="IPR002220">
    <property type="entry name" value="DapA-like"/>
</dbReference>
<dbReference type="InterPro" id="IPR020625">
    <property type="entry name" value="Schiff_base-form_aldolases_AS"/>
</dbReference>
<dbReference type="NCBIfam" id="TIGR00674">
    <property type="entry name" value="dapA"/>
    <property type="match status" value="1"/>
</dbReference>
<dbReference type="PANTHER" id="PTHR12128:SF66">
    <property type="entry name" value="4-HYDROXY-2-OXOGLUTARATE ALDOLASE, MITOCHONDRIAL"/>
    <property type="match status" value="1"/>
</dbReference>
<dbReference type="PANTHER" id="PTHR12128">
    <property type="entry name" value="DIHYDRODIPICOLINATE SYNTHASE"/>
    <property type="match status" value="1"/>
</dbReference>
<dbReference type="Pfam" id="PF00701">
    <property type="entry name" value="DHDPS"/>
    <property type="match status" value="1"/>
</dbReference>
<dbReference type="PIRSF" id="PIRSF001365">
    <property type="entry name" value="DHDPS"/>
    <property type="match status" value="1"/>
</dbReference>
<dbReference type="PRINTS" id="PR00146">
    <property type="entry name" value="DHPICSNTHASE"/>
</dbReference>
<dbReference type="SMART" id="SM01130">
    <property type="entry name" value="DHDPS"/>
    <property type="match status" value="1"/>
</dbReference>
<dbReference type="SUPFAM" id="SSF51569">
    <property type="entry name" value="Aldolase"/>
    <property type="match status" value="1"/>
</dbReference>
<dbReference type="PROSITE" id="PS00666">
    <property type="entry name" value="DHDPS_2"/>
    <property type="match status" value="1"/>
</dbReference>
<feature type="chain" id="PRO_0000340966" description="4-hydroxy-tetrahydrodipicolinate synthase">
    <location>
        <begin position="1"/>
        <end position="288"/>
    </location>
</feature>
<feature type="active site" description="Proton donor/acceptor" evidence="1">
    <location>
        <position position="136"/>
    </location>
</feature>
<feature type="active site" description="Schiff-base intermediate with substrate" evidence="1">
    <location>
        <position position="164"/>
    </location>
</feature>
<feature type="binding site" evidence="1">
    <location>
        <position position="47"/>
    </location>
    <ligand>
        <name>pyruvate</name>
        <dbReference type="ChEBI" id="CHEBI:15361"/>
    </ligand>
</feature>
<feature type="binding site" evidence="1">
    <location>
        <position position="204"/>
    </location>
    <ligand>
        <name>pyruvate</name>
        <dbReference type="ChEBI" id="CHEBI:15361"/>
    </ligand>
</feature>
<feature type="site" description="Part of a proton relay during catalysis" evidence="1">
    <location>
        <position position="46"/>
    </location>
</feature>
<feature type="site" description="Part of a proton relay during catalysis" evidence="1">
    <location>
        <position position="110"/>
    </location>
</feature>
<evidence type="ECO:0000255" key="1">
    <source>
        <dbReference type="HAMAP-Rule" id="MF_00418"/>
    </source>
</evidence>
<evidence type="ECO:0000305" key="2"/>
<organism>
    <name type="scientific">Leuconostoc mesenteroides subsp. mesenteroides (strain ATCC 8293 / DSM 20343 / BCRC 11652 / CCM 1803 / JCM 6124 / NCDO 523 / NBRC 100496 / NCIMB 8023 / NCTC 12954 / NRRL B-1118 / 37Y)</name>
    <dbReference type="NCBI Taxonomy" id="203120"/>
    <lineage>
        <taxon>Bacteria</taxon>
        <taxon>Bacillati</taxon>
        <taxon>Bacillota</taxon>
        <taxon>Bacilli</taxon>
        <taxon>Lactobacillales</taxon>
        <taxon>Lactobacillaceae</taxon>
        <taxon>Leuconostoc</taxon>
    </lineage>
</organism>
<reference key="1">
    <citation type="journal article" date="2006" name="Proc. Natl. Acad. Sci. U.S.A.">
        <title>Comparative genomics of the lactic acid bacteria.</title>
        <authorList>
            <person name="Makarova K.S."/>
            <person name="Slesarev A."/>
            <person name="Wolf Y.I."/>
            <person name="Sorokin A."/>
            <person name="Mirkin B."/>
            <person name="Koonin E.V."/>
            <person name="Pavlov A."/>
            <person name="Pavlova N."/>
            <person name="Karamychev V."/>
            <person name="Polouchine N."/>
            <person name="Shakhova V."/>
            <person name="Grigoriev I."/>
            <person name="Lou Y."/>
            <person name="Rohksar D."/>
            <person name="Lucas S."/>
            <person name="Huang K."/>
            <person name="Goodstein D.M."/>
            <person name="Hawkins T."/>
            <person name="Plengvidhya V."/>
            <person name="Welker D."/>
            <person name="Hughes J."/>
            <person name="Goh Y."/>
            <person name="Benson A."/>
            <person name="Baldwin K."/>
            <person name="Lee J.-H."/>
            <person name="Diaz-Muniz I."/>
            <person name="Dosti B."/>
            <person name="Smeianov V."/>
            <person name="Wechter W."/>
            <person name="Barabote R."/>
            <person name="Lorca G."/>
            <person name="Altermann E."/>
            <person name="Barrangou R."/>
            <person name="Ganesan B."/>
            <person name="Xie Y."/>
            <person name="Rawsthorne H."/>
            <person name="Tamir D."/>
            <person name="Parker C."/>
            <person name="Breidt F."/>
            <person name="Broadbent J.R."/>
            <person name="Hutkins R."/>
            <person name="O'Sullivan D."/>
            <person name="Steele J."/>
            <person name="Unlu G."/>
            <person name="Saier M.H. Jr."/>
            <person name="Klaenhammer T."/>
            <person name="Richardson P."/>
            <person name="Kozyavkin S."/>
            <person name="Weimer B.C."/>
            <person name="Mills D.A."/>
        </authorList>
    </citation>
    <scope>NUCLEOTIDE SEQUENCE [LARGE SCALE GENOMIC DNA]</scope>
    <source>
        <strain>ATCC 8293 / DSM 20343 / BCRC 11652 / CCM 1803 / JCM 6124 / NCDO 523 / NBRC 100496 / NCIMB 8023 / NCTC 12954 / NRRL B-1118 / 37Y</strain>
    </source>
</reference>
<name>DAPA_LEUMM</name>
<proteinExistence type="inferred from homology"/>